<gene>
    <name evidence="1" type="primary">def</name>
    <name type="ordered locus">LL0560</name>
    <name type="ORF">L154885</name>
</gene>
<sequence>MISMDDIIREGYPTLREVANDVTLPLSDEDIILGEKMLQFLHNSQDPVMAEKMGLRGGVGLAANQLGLLKKVIAVLIPNEPEVDEDGNEIPPKEAYKMREIMYNAKVVSHSVQDAAVEGGEGCLSVDREVPGYVVRHARVTVEYYNKEGEKKKIRLKDFPAICVQHEIDHTNGVMFYDHINMNDPWEIKDGMIIVK</sequence>
<organism>
    <name type="scientific">Lactococcus lactis subsp. lactis (strain IL1403)</name>
    <name type="common">Streptococcus lactis</name>
    <dbReference type="NCBI Taxonomy" id="272623"/>
    <lineage>
        <taxon>Bacteria</taxon>
        <taxon>Bacillati</taxon>
        <taxon>Bacillota</taxon>
        <taxon>Bacilli</taxon>
        <taxon>Lactobacillales</taxon>
        <taxon>Streptococcaceae</taxon>
        <taxon>Lactococcus</taxon>
    </lineage>
</organism>
<keyword id="KW-0378">Hydrolase</keyword>
<keyword id="KW-0408">Iron</keyword>
<keyword id="KW-0479">Metal-binding</keyword>
<keyword id="KW-0648">Protein biosynthesis</keyword>
<keyword id="KW-1185">Reference proteome</keyword>
<name>DEF_LACLA</name>
<feature type="chain" id="PRO_0000082792" description="Peptide deformylase">
    <location>
        <begin position="1"/>
        <end position="196"/>
    </location>
</feature>
<feature type="active site" evidence="1">
    <location>
        <position position="167"/>
    </location>
</feature>
<feature type="binding site" evidence="1">
    <location>
        <position position="123"/>
    </location>
    <ligand>
        <name>Fe cation</name>
        <dbReference type="ChEBI" id="CHEBI:24875"/>
    </ligand>
</feature>
<feature type="binding site" evidence="1">
    <location>
        <position position="166"/>
    </location>
    <ligand>
        <name>Fe cation</name>
        <dbReference type="ChEBI" id="CHEBI:24875"/>
    </ligand>
</feature>
<feature type="binding site" evidence="1">
    <location>
        <position position="170"/>
    </location>
    <ligand>
        <name>Fe cation</name>
        <dbReference type="ChEBI" id="CHEBI:24875"/>
    </ligand>
</feature>
<feature type="sequence conflict" description="In Ref. 1; AAC41454." evidence="2" ref="1">
    <original>D</original>
    <variation>E</variation>
    <location>
        <position position="86"/>
    </location>
</feature>
<reference key="1">
    <citation type="journal article" date="1995" name="Microbiology">
        <title>Lactococcus lactis glyceraldehyde-3-phosphate dehydrogenase gene, gap: further evidence for strongly biased codon usage in glycolytic pathway genes.</title>
        <authorList>
            <person name="Cancilla M.R."/>
            <person name="Hillier A.J."/>
            <person name="Davidson B.E."/>
        </authorList>
    </citation>
    <scope>NUCLEOTIDE SEQUENCE [GENOMIC DNA]</scope>
    <source>
        <strain>LM0230</strain>
    </source>
</reference>
<reference key="2">
    <citation type="journal article" date="2001" name="Genome Res.">
        <title>The complete genome sequence of the lactic acid bacterium Lactococcus lactis ssp. lactis IL1403.</title>
        <authorList>
            <person name="Bolotin A."/>
            <person name="Wincker P."/>
            <person name="Mauger S."/>
            <person name="Jaillon O."/>
            <person name="Malarme K."/>
            <person name="Weissenbach J."/>
            <person name="Ehrlich S.D."/>
            <person name="Sorokin A."/>
        </authorList>
    </citation>
    <scope>NUCLEOTIDE SEQUENCE [LARGE SCALE GENOMIC DNA]</scope>
    <source>
        <strain>IL1403</strain>
    </source>
</reference>
<proteinExistence type="inferred from homology"/>
<comment type="function">
    <text evidence="1">Removes the formyl group from the N-terminal Met of newly synthesized proteins. Requires at least a dipeptide for an efficient rate of reaction. N-terminal L-methionine is a prerequisite for activity but the enzyme has broad specificity at other positions.</text>
</comment>
<comment type="catalytic activity">
    <reaction evidence="1">
        <text>N-terminal N-formyl-L-methionyl-[peptide] + H2O = N-terminal L-methionyl-[peptide] + formate</text>
        <dbReference type="Rhea" id="RHEA:24420"/>
        <dbReference type="Rhea" id="RHEA-COMP:10639"/>
        <dbReference type="Rhea" id="RHEA-COMP:10640"/>
        <dbReference type="ChEBI" id="CHEBI:15377"/>
        <dbReference type="ChEBI" id="CHEBI:15740"/>
        <dbReference type="ChEBI" id="CHEBI:49298"/>
        <dbReference type="ChEBI" id="CHEBI:64731"/>
        <dbReference type="EC" id="3.5.1.88"/>
    </reaction>
</comment>
<comment type="cofactor">
    <cofactor evidence="1">
        <name>Fe(2+)</name>
        <dbReference type="ChEBI" id="CHEBI:29033"/>
    </cofactor>
    <text evidence="1">Binds 1 Fe(2+) ion.</text>
</comment>
<comment type="similarity">
    <text evidence="1">Belongs to the polypeptide deformylase family.</text>
</comment>
<comment type="sequence caution" evidence="2">
    <conflict type="erroneous initiation">
        <sequence resource="EMBL-CDS" id="AAC41454"/>
    </conflict>
</comment>
<comment type="sequence caution" evidence="2">
    <conflict type="erroneous initiation">
        <sequence resource="EMBL-CDS" id="AAK04658"/>
    </conflict>
</comment>
<protein>
    <recommendedName>
        <fullName evidence="1">Peptide deformylase</fullName>
        <shortName evidence="1">PDF</shortName>
        <ecNumber evidence="1">3.5.1.88</ecNumber>
    </recommendedName>
    <alternativeName>
        <fullName evidence="1">Polypeptide deformylase</fullName>
    </alternativeName>
</protein>
<dbReference type="EC" id="3.5.1.88" evidence="1"/>
<dbReference type="EMBL" id="L36907">
    <property type="protein sequence ID" value="AAC41454.1"/>
    <property type="status" value="ALT_INIT"/>
    <property type="molecule type" value="Genomic_DNA"/>
</dbReference>
<dbReference type="EMBL" id="AE005176">
    <property type="protein sequence ID" value="AAK04658.1"/>
    <property type="status" value="ALT_INIT"/>
    <property type="molecule type" value="Genomic_DNA"/>
</dbReference>
<dbReference type="PIR" id="H86694">
    <property type="entry name" value="H86694"/>
</dbReference>
<dbReference type="RefSeq" id="NP_266716.1">
    <property type="nucleotide sequence ID" value="NC_002662.1"/>
</dbReference>
<dbReference type="SMR" id="Q48661"/>
<dbReference type="PaxDb" id="272623-L154885"/>
<dbReference type="EnsemblBacteria" id="AAK04658">
    <property type="protein sequence ID" value="AAK04658"/>
    <property type="gene ID" value="L154885"/>
</dbReference>
<dbReference type="KEGG" id="lla:L154885"/>
<dbReference type="PATRIC" id="fig|272623.7.peg.598"/>
<dbReference type="eggNOG" id="COG0242">
    <property type="taxonomic scope" value="Bacteria"/>
</dbReference>
<dbReference type="HOGENOM" id="CLU_061901_4_0_9"/>
<dbReference type="OrthoDB" id="9784988at2"/>
<dbReference type="Proteomes" id="UP000002196">
    <property type="component" value="Chromosome"/>
</dbReference>
<dbReference type="GO" id="GO:0046872">
    <property type="term" value="F:metal ion binding"/>
    <property type="evidence" value="ECO:0007669"/>
    <property type="project" value="UniProtKB-KW"/>
</dbReference>
<dbReference type="GO" id="GO:0042586">
    <property type="term" value="F:peptide deformylase activity"/>
    <property type="evidence" value="ECO:0007669"/>
    <property type="project" value="UniProtKB-UniRule"/>
</dbReference>
<dbReference type="GO" id="GO:0043686">
    <property type="term" value="P:co-translational protein modification"/>
    <property type="evidence" value="ECO:0007669"/>
    <property type="project" value="TreeGrafter"/>
</dbReference>
<dbReference type="GO" id="GO:0006412">
    <property type="term" value="P:translation"/>
    <property type="evidence" value="ECO:0007669"/>
    <property type="project" value="UniProtKB-UniRule"/>
</dbReference>
<dbReference type="CDD" id="cd00487">
    <property type="entry name" value="Pep_deformylase"/>
    <property type="match status" value="1"/>
</dbReference>
<dbReference type="FunFam" id="3.90.45.10:FF:000002">
    <property type="entry name" value="Peptide deformylase"/>
    <property type="match status" value="1"/>
</dbReference>
<dbReference type="Gene3D" id="3.90.45.10">
    <property type="entry name" value="Peptide deformylase"/>
    <property type="match status" value="1"/>
</dbReference>
<dbReference type="HAMAP" id="MF_00163">
    <property type="entry name" value="Pep_deformylase"/>
    <property type="match status" value="1"/>
</dbReference>
<dbReference type="InterPro" id="IPR023635">
    <property type="entry name" value="Peptide_deformylase"/>
</dbReference>
<dbReference type="InterPro" id="IPR036821">
    <property type="entry name" value="Peptide_deformylase_sf"/>
</dbReference>
<dbReference type="NCBIfam" id="TIGR00079">
    <property type="entry name" value="pept_deformyl"/>
    <property type="match status" value="1"/>
</dbReference>
<dbReference type="PANTHER" id="PTHR10458">
    <property type="entry name" value="PEPTIDE DEFORMYLASE"/>
    <property type="match status" value="1"/>
</dbReference>
<dbReference type="PANTHER" id="PTHR10458:SF8">
    <property type="entry name" value="PEPTIDE DEFORMYLASE 2"/>
    <property type="match status" value="1"/>
</dbReference>
<dbReference type="Pfam" id="PF01327">
    <property type="entry name" value="Pep_deformylase"/>
    <property type="match status" value="1"/>
</dbReference>
<dbReference type="PRINTS" id="PR01576">
    <property type="entry name" value="PDEFORMYLASE"/>
</dbReference>
<dbReference type="SUPFAM" id="SSF56420">
    <property type="entry name" value="Peptide deformylase"/>
    <property type="match status" value="1"/>
</dbReference>
<accession>Q48661</accession>
<accession>Q9CI08</accession>
<evidence type="ECO:0000255" key="1">
    <source>
        <dbReference type="HAMAP-Rule" id="MF_00163"/>
    </source>
</evidence>
<evidence type="ECO:0000305" key="2"/>